<evidence type="ECO:0000255" key="1">
    <source>
        <dbReference type="HAMAP-Rule" id="MF_01164"/>
    </source>
</evidence>
<comment type="function">
    <text evidence="1">Catalyzes the transfer of 4-deoxy-4-formamido-L-arabinose from UDP to undecaprenyl phosphate. The modified arabinose is attached to lipid A and is required for resistance to polymyxin and cationic antimicrobial peptides.</text>
</comment>
<comment type="catalytic activity">
    <reaction evidence="1">
        <text>UDP-4-deoxy-4-formamido-beta-L-arabinose + di-trans,octa-cis-undecaprenyl phosphate = 4-deoxy-4-formamido-alpha-L-arabinopyranosyl di-trans,octa-cis-undecaprenyl phosphate + UDP</text>
        <dbReference type="Rhea" id="RHEA:27722"/>
        <dbReference type="ChEBI" id="CHEBI:58223"/>
        <dbReference type="ChEBI" id="CHEBI:58709"/>
        <dbReference type="ChEBI" id="CHEBI:58909"/>
        <dbReference type="ChEBI" id="CHEBI:60392"/>
        <dbReference type="EC" id="2.4.2.53"/>
    </reaction>
</comment>
<comment type="pathway">
    <text evidence="1">Glycolipid biosynthesis; 4-amino-4-deoxy-alpha-L-arabinose undecaprenyl phosphate biosynthesis; 4-amino-4-deoxy-alpha-L-arabinose undecaprenyl phosphate from UDP-4-deoxy-4-formamido-beta-L-arabinose and undecaprenyl phosphate: step 1/2.</text>
</comment>
<comment type="pathway">
    <text evidence="1">Bacterial outer membrane biogenesis; lipopolysaccharide biosynthesis.</text>
</comment>
<comment type="subcellular location">
    <subcellularLocation>
        <location evidence="1">Cell inner membrane</location>
        <topology evidence="1">Multi-pass membrane protein</topology>
    </subcellularLocation>
</comment>
<comment type="similarity">
    <text evidence="1">Belongs to the glycosyltransferase 2 family.</text>
</comment>
<name>ARNC_PSE14</name>
<organism>
    <name type="scientific">Pseudomonas savastanoi pv. phaseolicola (strain 1448A / Race 6)</name>
    <name type="common">Pseudomonas syringae pv. phaseolicola (strain 1448A / Race 6)</name>
    <dbReference type="NCBI Taxonomy" id="264730"/>
    <lineage>
        <taxon>Bacteria</taxon>
        <taxon>Pseudomonadati</taxon>
        <taxon>Pseudomonadota</taxon>
        <taxon>Gammaproteobacteria</taxon>
        <taxon>Pseudomonadales</taxon>
        <taxon>Pseudomonadaceae</taxon>
        <taxon>Pseudomonas</taxon>
    </lineage>
</organism>
<protein>
    <recommendedName>
        <fullName evidence="1">Undecaprenyl-phosphate 4-deoxy-4-formamido-L-arabinose transferase</fullName>
        <ecNumber evidence="1">2.4.2.53</ecNumber>
    </recommendedName>
    <alternativeName>
        <fullName evidence="1">Undecaprenyl-phosphate Ara4FN transferase</fullName>
        <shortName evidence="1">Ara4FN transferase</shortName>
    </alternativeName>
</protein>
<feature type="chain" id="PRO_0000380270" description="Undecaprenyl-phosphate 4-deoxy-4-formamido-L-arabinose transferase">
    <location>
        <begin position="1"/>
        <end position="337"/>
    </location>
</feature>
<feature type="transmembrane region" description="Helical" evidence="1">
    <location>
        <begin position="235"/>
        <end position="255"/>
    </location>
</feature>
<feature type="transmembrane region" description="Helical" evidence="1">
    <location>
        <begin position="270"/>
        <end position="290"/>
    </location>
</feature>
<dbReference type="EC" id="2.4.2.53" evidence="1"/>
<dbReference type="EMBL" id="CP000058">
    <property type="protein sequence ID" value="AAZ36010.1"/>
    <property type="molecule type" value="Genomic_DNA"/>
</dbReference>
<dbReference type="RefSeq" id="WP_004665471.1">
    <property type="nucleotide sequence ID" value="NC_005773.3"/>
</dbReference>
<dbReference type="SMR" id="Q48HZ2"/>
<dbReference type="CAZy" id="GT2">
    <property type="family name" value="Glycosyltransferase Family 2"/>
</dbReference>
<dbReference type="KEGG" id="psp:PSPPH_2803"/>
<dbReference type="eggNOG" id="COG0463">
    <property type="taxonomic scope" value="Bacteria"/>
</dbReference>
<dbReference type="HOGENOM" id="CLU_033536_0_0_6"/>
<dbReference type="UniPathway" id="UPA00030"/>
<dbReference type="UniPathway" id="UPA00036">
    <property type="reaction ID" value="UER00495"/>
</dbReference>
<dbReference type="Proteomes" id="UP000000551">
    <property type="component" value="Chromosome"/>
</dbReference>
<dbReference type="GO" id="GO:0005886">
    <property type="term" value="C:plasma membrane"/>
    <property type="evidence" value="ECO:0007669"/>
    <property type="project" value="UniProtKB-SubCell"/>
</dbReference>
<dbReference type="GO" id="GO:0016780">
    <property type="term" value="F:phosphotransferase activity, for other substituted phosphate groups"/>
    <property type="evidence" value="ECO:0007669"/>
    <property type="project" value="UniProtKB-UniRule"/>
</dbReference>
<dbReference type="GO" id="GO:0099621">
    <property type="term" value="F:undecaprenyl-phosphate 4-deoxy-4-formamido-L-arabinose transferase activity"/>
    <property type="evidence" value="ECO:0007669"/>
    <property type="project" value="UniProtKB-EC"/>
</dbReference>
<dbReference type="GO" id="GO:0036108">
    <property type="term" value="P:4-amino-4-deoxy-alpha-L-arabinopyranosyl undecaprenyl phosphate biosynthetic process"/>
    <property type="evidence" value="ECO:0007669"/>
    <property type="project" value="UniProtKB-UniRule"/>
</dbReference>
<dbReference type="GO" id="GO:0009245">
    <property type="term" value="P:lipid A biosynthetic process"/>
    <property type="evidence" value="ECO:0007669"/>
    <property type="project" value="UniProtKB-UniRule"/>
</dbReference>
<dbReference type="GO" id="GO:0009103">
    <property type="term" value="P:lipopolysaccharide biosynthetic process"/>
    <property type="evidence" value="ECO:0007669"/>
    <property type="project" value="UniProtKB-UniRule"/>
</dbReference>
<dbReference type="GO" id="GO:0046677">
    <property type="term" value="P:response to antibiotic"/>
    <property type="evidence" value="ECO:0007669"/>
    <property type="project" value="UniProtKB-KW"/>
</dbReference>
<dbReference type="CDD" id="cd04187">
    <property type="entry name" value="DPM1_like_bac"/>
    <property type="match status" value="1"/>
</dbReference>
<dbReference type="Gene3D" id="3.90.550.10">
    <property type="entry name" value="Spore Coat Polysaccharide Biosynthesis Protein SpsA, Chain A"/>
    <property type="match status" value="1"/>
</dbReference>
<dbReference type="HAMAP" id="MF_01164">
    <property type="entry name" value="ArnC_transfer"/>
    <property type="match status" value="1"/>
</dbReference>
<dbReference type="InterPro" id="IPR022857">
    <property type="entry name" value="ArnC_tfrase"/>
</dbReference>
<dbReference type="InterPro" id="IPR001173">
    <property type="entry name" value="Glyco_trans_2-like"/>
</dbReference>
<dbReference type="InterPro" id="IPR050256">
    <property type="entry name" value="Glycosyltransferase_2"/>
</dbReference>
<dbReference type="InterPro" id="IPR029044">
    <property type="entry name" value="Nucleotide-diphossugar_trans"/>
</dbReference>
<dbReference type="NCBIfam" id="NF007986">
    <property type="entry name" value="PRK10714.1"/>
    <property type="match status" value="1"/>
</dbReference>
<dbReference type="PANTHER" id="PTHR48090:SF3">
    <property type="entry name" value="UNDECAPRENYL-PHOSPHATE 4-DEOXY-4-FORMAMIDO-L-ARABINOSE TRANSFERASE"/>
    <property type="match status" value="1"/>
</dbReference>
<dbReference type="PANTHER" id="PTHR48090">
    <property type="entry name" value="UNDECAPRENYL-PHOSPHATE 4-DEOXY-4-FORMAMIDO-L-ARABINOSE TRANSFERASE-RELATED"/>
    <property type="match status" value="1"/>
</dbReference>
<dbReference type="Pfam" id="PF00535">
    <property type="entry name" value="Glycos_transf_2"/>
    <property type="match status" value="1"/>
</dbReference>
<dbReference type="SUPFAM" id="SSF53448">
    <property type="entry name" value="Nucleotide-diphospho-sugar transferases"/>
    <property type="match status" value="1"/>
</dbReference>
<proteinExistence type="inferred from homology"/>
<keyword id="KW-0046">Antibiotic resistance</keyword>
<keyword id="KW-0997">Cell inner membrane</keyword>
<keyword id="KW-1003">Cell membrane</keyword>
<keyword id="KW-0328">Glycosyltransferase</keyword>
<keyword id="KW-0441">Lipid A biosynthesis</keyword>
<keyword id="KW-0444">Lipid biosynthesis</keyword>
<keyword id="KW-0443">Lipid metabolism</keyword>
<keyword id="KW-0448">Lipopolysaccharide biosynthesis</keyword>
<keyword id="KW-0472">Membrane</keyword>
<keyword id="KW-0808">Transferase</keyword>
<keyword id="KW-0812">Transmembrane</keyword>
<keyword id="KW-1133">Transmembrane helix</keyword>
<sequence>MRPYPIKFVSIVIPVYNERQSLPELLRRTEAACKHLNHRFEIVLVDDGSRDDSAEILQQAAERSASPFVAVILNRNYGQHAAIMAGFEQCKGDVVITLDADLQNPPEEIPRLVALAEQGYDVVGTVRSNRQDSAWRRWPSKIINVAVQRSTGVAMSDYGCMLRAYRRTIVDAMLACRERSTFIPILANSFARHTTEVLVDHAEREHGDSKYSPMRLVNLMFDLITCMTTTPLRLLSIIGFSMALLGVLFAALLIILRLIFGAPWAGDGTFVLFAVLFVFTGGQFIGMGLLGEYLGRMYSDVRARPRFFIEKVVRSSSEVVSESVDSSVTPYMNKVAP</sequence>
<gene>
    <name evidence="1" type="primary">arnC</name>
    <name type="ordered locus">PSPPH_2803</name>
</gene>
<accession>Q48HZ2</accession>
<reference key="1">
    <citation type="journal article" date="2005" name="J. Bacteriol.">
        <title>Whole-genome sequence analysis of Pseudomonas syringae pv. phaseolicola 1448A reveals divergence among pathovars in genes involved in virulence and transposition.</title>
        <authorList>
            <person name="Joardar V."/>
            <person name="Lindeberg M."/>
            <person name="Jackson R.W."/>
            <person name="Selengut J."/>
            <person name="Dodson R."/>
            <person name="Brinkac L.M."/>
            <person name="Daugherty S.C."/>
            <person name="DeBoy R.T."/>
            <person name="Durkin A.S."/>
            <person name="Gwinn Giglio M."/>
            <person name="Madupu R."/>
            <person name="Nelson W.C."/>
            <person name="Rosovitz M.J."/>
            <person name="Sullivan S.A."/>
            <person name="Crabtree J."/>
            <person name="Creasy T."/>
            <person name="Davidsen T.M."/>
            <person name="Haft D.H."/>
            <person name="Zafar N."/>
            <person name="Zhou L."/>
            <person name="Halpin R."/>
            <person name="Holley T."/>
            <person name="Khouri H.M."/>
            <person name="Feldblyum T.V."/>
            <person name="White O."/>
            <person name="Fraser C.M."/>
            <person name="Chatterjee A.K."/>
            <person name="Cartinhour S."/>
            <person name="Schneider D."/>
            <person name="Mansfield J.W."/>
            <person name="Collmer A."/>
            <person name="Buell R."/>
        </authorList>
    </citation>
    <scope>NUCLEOTIDE SEQUENCE [LARGE SCALE GENOMIC DNA]</scope>
    <source>
        <strain>1448A / Race 6</strain>
    </source>
</reference>